<sequence>MRYGFFDISQDFITIFCPKKTLKNCMFGLIGSRTQATLRQEKNQNFSFFVNEANEIAGFNFFDIKKSFRRGLISHHFTAGLNYPSLKLVKKISELLNYDLTPLAKKVPFVVCEVISAIPIPNTHLKRCKVNTGSNKSLDVVCGADNVRVGLKTVLVHVGGVLPDGTIIKKAKIAGYDSMGMLCSEKELNLKPKNQGIIEIKSHIKIGKSFLDVYLNNSEKFSAWVSTKKRVTGN</sequence>
<gene>
    <name type="ordered locus">MPN_663</name>
    <name type="ORF">K05_orf234</name>
    <name type="ORF">MP179</name>
</gene>
<proteinExistence type="predicted"/>
<name>Y663_MYCPN</name>
<organism>
    <name type="scientific">Mycoplasma pneumoniae (strain ATCC 29342 / M129 / Subtype 1)</name>
    <name type="common">Mycoplasmoides pneumoniae</name>
    <dbReference type="NCBI Taxonomy" id="272634"/>
    <lineage>
        <taxon>Bacteria</taxon>
        <taxon>Bacillati</taxon>
        <taxon>Mycoplasmatota</taxon>
        <taxon>Mycoplasmoidales</taxon>
        <taxon>Mycoplasmoidaceae</taxon>
        <taxon>Mycoplasmoides</taxon>
    </lineage>
</organism>
<feature type="chain" id="PRO_0000210622" description="Uncharacterized protein MG449 homolog">
    <location>
        <begin position="1"/>
        <end position="234"/>
    </location>
</feature>
<feature type="domain" description="tRNA-binding" evidence="1">
    <location>
        <begin position="103"/>
        <end position="211"/>
    </location>
</feature>
<accession>P75128</accession>
<keyword id="KW-1185">Reference proteome</keyword>
<keyword id="KW-0694">RNA-binding</keyword>
<keyword id="KW-0820">tRNA-binding</keyword>
<reference key="1">
    <citation type="journal article" date="1996" name="Nucleic Acids Res.">
        <title>Complete sequence analysis of the genome of the bacterium Mycoplasma pneumoniae.</title>
        <authorList>
            <person name="Himmelreich R."/>
            <person name="Hilbert H."/>
            <person name="Plagens H."/>
            <person name="Pirkl E."/>
            <person name="Li B.-C."/>
            <person name="Herrmann R."/>
        </authorList>
    </citation>
    <scope>NUCLEOTIDE SEQUENCE [LARGE SCALE GENOMIC DNA]</scope>
    <source>
        <strain>ATCC 29342 / M129 / Subtype 1</strain>
    </source>
</reference>
<protein>
    <recommendedName>
        <fullName>Uncharacterized protein MG449 homolog</fullName>
    </recommendedName>
</protein>
<dbReference type="EMBL" id="U00089">
    <property type="protein sequence ID" value="AAB95827.1"/>
    <property type="molecule type" value="Genomic_DNA"/>
</dbReference>
<dbReference type="PIR" id="S73505">
    <property type="entry name" value="S73505"/>
</dbReference>
<dbReference type="RefSeq" id="NP_110352.1">
    <property type="nucleotide sequence ID" value="NC_000912.1"/>
</dbReference>
<dbReference type="SMR" id="P75128"/>
<dbReference type="IntAct" id="P75128">
    <property type="interactions" value="6"/>
</dbReference>
<dbReference type="STRING" id="272634.MPN_663"/>
<dbReference type="EnsemblBacteria" id="AAB95827">
    <property type="protein sequence ID" value="AAB95827"/>
    <property type="gene ID" value="MPN_663"/>
</dbReference>
<dbReference type="KEGG" id="mpn:MPN_663"/>
<dbReference type="PATRIC" id="fig|272634.6.peg.728"/>
<dbReference type="HOGENOM" id="CLU_098250_1_0_14"/>
<dbReference type="OrthoDB" id="9805455at2"/>
<dbReference type="BioCyc" id="MPNE272634:G1GJ3-1062-MONOMER"/>
<dbReference type="Proteomes" id="UP000000808">
    <property type="component" value="Chromosome"/>
</dbReference>
<dbReference type="GO" id="GO:0000049">
    <property type="term" value="F:tRNA binding"/>
    <property type="evidence" value="ECO:0007669"/>
    <property type="project" value="UniProtKB-KW"/>
</dbReference>
<dbReference type="CDD" id="cd02796">
    <property type="entry name" value="tRNA_bind_bactPheRS"/>
    <property type="match status" value="1"/>
</dbReference>
<dbReference type="Gene3D" id="2.40.50.140">
    <property type="entry name" value="Nucleic acid-binding proteins"/>
    <property type="match status" value="1"/>
</dbReference>
<dbReference type="Gene3D" id="3.30.1940.10">
    <property type="entry name" value="YtpR-like"/>
    <property type="match status" value="1"/>
</dbReference>
<dbReference type="InterPro" id="IPR012340">
    <property type="entry name" value="NA-bd_OB-fold"/>
</dbReference>
<dbReference type="InterPro" id="IPR002547">
    <property type="entry name" value="tRNA-bd_dom"/>
</dbReference>
<dbReference type="InterPro" id="IPR033714">
    <property type="entry name" value="tRNA_bind_bactPheRS"/>
</dbReference>
<dbReference type="InterPro" id="IPR037154">
    <property type="entry name" value="YtpR-like_sf"/>
</dbReference>
<dbReference type="NCBIfam" id="NF045760">
    <property type="entry name" value="YtpR"/>
    <property type="match status" value="1"/>
</dbReference>
<dbReference type="Pfam" id="PF01588">
    <property type="entry name" value="tRNA_bind"/>
    <property type="match status" value="1"/>
</dbReference>
<dbReference type="SUPFAM" id="SSF50249">
    <property type="entry name" value="Nucleic acid-binding proteins"/>
    <property type="match status" value="1"/>
</dbReference>
<dbReference type="PROSITE" id="PS50886">
    <property type="entry name" value="TRBD"/>
    <property type="match status" value="1"/>
</dbReference>
<evidence type="ECO:0000255" key="1">
    <source>
        <dbReference type="PROSITE-ProRule" id="PRU00209"/>
    </source>
</evidence>